<feature type="chain" id="PRO_0000384035" description="Lactate utilization protein A 1">
    <location>
        <begin position="1"/>
        <end position="239"/>
    </location>
</feature>
<protein>
    <recommendedName>
        <fullName evidence="1">Lactate utilization protein A 1</fullName>
    </recommendedName>
</protein>
<sequence length="239" mass="26190">MKVTLFVTCLVDMFETNVGKATVEVLERLGCEIEFPEAQVCCGQPAYNSGHVEAAKEAMKHMIETFEDAEYIVTPSGSCATMFHEYPHVFKDDPKWAKRAQKVADKTYEFTQFIVDVLKVTDVGASLPGIATIHKSCHMTRMLGVTEAPGILLSNVKGLTVRELPNVQNCCGFGGTFSVKMTPISEQMVDEKVDSAMETGADYLIGADCGCLLNIGGRIERLGKEIKVMHIAEVLNSRS</sequence>
<proteinExistence type="inferred from homology"/>
<accession>B9IUP3</accession>
<name>LUTA1_BACCQ</name>
<comment type="function">
    <text evidence="1">Is involved in L-lactate degradation and allows cells to grow with lactate as the sole carbon source.</text>
</comment>
<comment type="similarity">
    <text evidence="1">Belongs to the LutA/YkgE family.</text>
</comment>
<dbReference type="EMBL" id="CP000227">
    <property type="protein sequence ID" value="ACM11804.1"/>
    <property type="molecule type" value="Genomic_DNA"/>
</dbReference>
<dbReference type="SMR" id="B9IUP3"/>
<dbReference type="KEGG" id="bcq:BCQ_1376"/>
<dbReference type="HOGENOM" id="CLU_023081_1_0_9"/>
<dbReference type="Proteomes" id="UP000000441">
    <property type="component" value="Chromosome"/>
</dbReference>
<dbReference type="GO" id="GO:0005829">
    <property type="term" value="C:cytosol"/>
    <property type="evidence" value="ECO:0007669"/>
    <property type="project" value="TreeGrafter"/>
</dbReference>
<dbReference type="GO" id="GO:0016491">
    <property type="term" value="F:oxidoreductase activity"/>
    <property type="evidence" value="ECO:0007669"/>
    <property type="project" value="UniProtKB-ARBA"/>
</dbReference>
<dbReference type="GO" id="GO:0006089">
    <property type="term" value="P:lactate metabolic process"/>
    <property type="evidence" value="ECO:0007669"/>
    <property type="project" value="UniProtKB-UniRule"/>
</dbReference>
<dbReference type="HAMAP" id="MF_02105">
    <property type="entry name" value="LutA"/>
    <property type="match status" value="1"/>
</dbReference>
<dbReference type="InterPro" id="IPR004017">
    <property type="entry name" value="Cys_rich_dom"/>
</dbReference>
<dbReference type="InterPro" id="IPR022822">
    <property type="entry name" value="LutA"/>
</dbReference>
<dbReference type="PANTHER" id="PTHR30296:SF0">
    <property type="entry name" value="LACTATE UTILIZATION PROTEIN A"/>
    <property type="match status" value="1"/>
</dbReference>
<dbReference type="PANTHER" id="PTHR30296">
    <property type="entry name" value="UNCHARACTERIZED PROTEIN YKGE"/>
    <property type="match status" value="1"/>
</dbReference>
<dbReference type="Pfam" id="PF02754">
    <property type="entry name" value="CCG"/>
    <property type="match status" value="2"/>
</dbReference>
<evidence type="ECO:0000255" key="1">
    <source>
        <dbReference type="HAMAP-Rule" id="MF_02105"/>
    </source>
</evidence>
<gene>
    <name evidence="1" type="primary">lutA1</name>
    <name type="ordered locus">BCQ_1376</name>
</gene>
<organism>
    <name type="scientific">Bacillus cereus (strain Q1)</name>
    <dbReference type="NCBI Taxonomy" id="361100"/>
    <lineage>
        <taxon>Bacteria</taxon>
        <taxon>Bacillati</taxon>
        <taxon>Bacillota</taxon>
        <taxon>Bacilli</taxon>
        <taxon>Bacillales</taxon>
        <taxon>Bacillaceae</taxon>
        <taxon>Bacillus</taxon>
        <taxon>Bacillus cereus group</taxon>
    </lineage>
</organism>
<reference key="1">
    <citation type="journal article" date="2009" name="J. Bacteriol.">
        <title>Complete genome sequence of the extremophilic Bacillus cereus strain Q1 with industrial applications.</title>
        <authorList>
            <person name="Xiong Z."/>
            <person name="Jiang Y."/>
            <person name="Qi D."/>
            <person name="Lu H."/>
            <person name="Yang F."/>
            <person name="Yang J."/>
            <person name="Chen L."/>
            <person name="Sun L."/>
            <person name="Xu X."/>
            <person name="Xue Y."/>
            <person name="Zhu Y."/>
            <person name="Jin Q."/>
        </authorList>
    </citation>
    <scope>NUCLEOTIDE SEQUENCE [LARGE SCALE GENOMIC DNA]</scope>
    <source>
        <strain>Q1</strain>
    </source>
</reference>